<comment type="function">
    <text evidence="4">Probable neurotoxin with ion channel impairing activity.</text>
</comment>
<comment type="subcellular location">
    <subcellularLocation>
        <location evidence="5">Secreted</location>
    </subcellularLocation>
</comment>
<comment type="tissue specificity">
    <text evidence="5">Expressed by the venom gland.</text>
</comment>
<comment type="domain">
    <text evidence="1">The presence of a 'disulfide through disulfide knot' structurally defines this protein as a knottin.</text>
</comment>
<comment type="similarity">
    <text evidence="4">Belongs to the neurotoxin 21 family.</text>
</comment>
<keyword id="KW-1015">Disulfide bond</keyword>
<keyword id="KW-0872">Ion channel impairing toxin</keyword>
<keyword id="KW-0960">Knottin</keyword>
<keyword id="KW-0528">Neurotoxin</keyword>
<keyword id="KW-0964">Secreted</keyword>
<keyword id="KW-0732">Signal</keyword>
<keyword id="KW-0800">Toxin</keyword>
<reference key="1">
    <citation type="journal article" date="2013" name="Toxins">
        <title>A proteomics and transcriptomics investigation of the venom from the barychelid spider Trittame loki (brush-foot trapdoor).</title>
        <authorList>
            <person name="Undheim E.A."/>
            <person name="Sunagar K."/>
            <person name="Herzig V."/>
            <person name="Kely L."/>
            <person name="Low D.H."/>
            <person name="Jackson T.N."/>
            <person name="Jones A."/>
            <person name="Kurniawan N."/>
            <person name="King G.F."/>
            <person name="Ali S.A."/>
            <person name="Antunes A."/>
            <person name="Ruder T."/>
            <person name="Fry B.G."/>
        </authorList>
    </citation>
    <scope>NUCLEOTIDE SEQUENCE [MRNA]</scope>
    <source>
        <tissue>Venom gland</tissue>
    </source>
</reference>
<name>TX21H_TRILK</name>
<organism>
    <name type="scientific">Trittame loki</name>
    <name type="common">Brush-footed trapdoor spider</name>
    <dbReference type="NCBI Taxonomy" id="1295018"/>
    <lineage>
        <taxon>Eukaryota</taxon>
        <taxon>Metazoa</taxon>
        <taxon>Ecdysozoa</taxon>
        <taxon>Arthropoda</taxon>
        <taxon>Chelicerata</taxon>
        <taxon>Arachnida</taxon>
        <taxon>Araneae</taxon>
        <taxon>Mygalomorphae</taxon>
        <taxon>Barychelidae</taxon>
        <taxon>Trittame</taxon>
    </lineage>
</organism>
<evidence type="ECO:0000250" key="1">
    <source>
        <dbReference type="UniProtKB" id="A0A452CSQ9"/>
    </source>
</evidence>
<evidence type="ECO:0000255" key="2"/>
<evidence type="ECO:0000303" key="3">
    <source>
    </source>
</evidence>
<evidence type="ECO:0000305" key="4"/>
<evidence type="ECO:0000305" key="5">
    <source>
    </source>
</evidence>
<accession>W4VRX3</accession>
<dbReference type="EMBL" id="GAQE01000020">
    <property type="protein sequence ID" value="JAB84534.1"/>
    <property type="molecule type" value="Transcribed_RNA"/>
</dbReference>
<dbReference type="SMR" id="W4VRX3"/>
<dbReference type="ArachnoServer" id="AS002009">
    <property type="toxin name" value="U6-barytoxin-Tl1b"/>
</dbReference>
<dbReference type="GO" id="GO:0005576">
    <property type="term" value="C:extracellular region"/>
    <property type="evidence" value="ECO:0007669"/>
    <property type="project" value="UniProtKB-SubCell"/>
</dbReference>
<dbReference type="GO" id="GO:0099106">
    <property type="term" value="F:ion channel regulator activity"/>
    <property type="evidence" value="ECO:0007669"/>
    <property type="project" value="UniProtKB-KW"/>
</dbReference>
<dbReference type="GO" id="GO:0090729">
    <property type="term" value="F:toxin activity"/>
    <property type="evidence" value="ECO:0007669"/>
    <property type="project" value="UniProtKB-KW"/>
</dbReference>
<dbReference type="InterPro" id="IPR035311">
    <property type="entry name" value="Cys_Knot_tox"/>
</dbReference>
<dbReference type="Pfam" id="PF17486">
    <property type="entry name" value="Cys_Knot_tox"/>
    <property type="match status" value="1"/>
</dbReference>
<feature type="signal peptide" evidence="2">
    <location>
        <begin position="1"/>
        <end position="19"/>
    </location>
</feature>
<feature type="chain" id="PRO_0000429224" description="Toxin ICK-17">
    <location>
        <begin position="20"/>
        <end position="92"/>
    </location>
</feature>
<feature type="disulfide bond" evidence="1">
    <location>
        <begin position="41"/>
        <end position="55"/>
    </location>
</feature>
<feature type="disulfide bond" evidence="1">
    <location>
        <begin position="48"/>
        <end position="67"/>
    </location>
</feature>
<feature type="disulfide bond" evidence="1">
    <location>
        <begin position="54"/>
        <end position="82"/>
    </location>
</feature>
<feature type="disulfide bond" evidence="1">
    <location>
        <begin position="85"/>
        <end position="92"/>
    </location>
</feature>
<protein>
    <recommendedName>
        <fullName evidence="3">Toxin ICK-17</fullName>
    </recommendedName>
</protein>
<proteinExistence type="inferred from homology"/>
<sequence>MKSIVSILLFCALAVVIMGHRLNQGYGIPHDVVKLPNGQWCKTPGDDCSQSSECCKAKDTVTYSSGCSQQWSGQQGGFVNLCRICNVESSMC</sequence>